<accession>O13019</accession>
<organism>
    <name type="scientific">Oreochromis niloticus</name>
    <name type="common">Nile tilapia</name>
    <name type="synonym">Tilapia nilotica</name>
    <dbReference type="NCBI Taxonomy" id="8128"/>
    <lineage>
        <taxon>Eukaryota</taxon>
        <taxon>Metazoa</taxon>
        <taxon>Chordata</taxon>
        <taxon>Craniata</taxon>
        <taxon>Vertebrata</taxon>
        <taxon>Euteleostomi</taxon>
        <taxon>Actinopterygii</taxon>
        <taxon>Neopterygii</taxon>
        <taxon>Teleostei</taxon>
        <taxon>Neoteleostei</taxon>
        <taxon>Acanthomorphata</taxon>
        <taxon>Ovalentaria</taxon>
        <taxon>Cichlomorphae</taxon>
        <taxon>Cichliformes</taxon>
        <taxon>Cichlidae</taxon>
        <taxon>African cichlids</taxon>
        <taxon>Pseudocrenilabrinae</taxon>
        <taxon>Oreochromini</taxon>
        <taxon>Oreochromis</taxon>
    </lineage>
</organism>
<gene>
    <name type="primary">rps12</name>
</gene>
<proteinExistence type="evidence at transcript level"/>
<keyword id="KW-1185">Reference proteome</keyword>
<keyword id="KW-0687">Ribonucleoprotein</keyword>
<keyword id="KW-0689">Ribosomal protein</keyword>
<protein>
    <recommendedName>
        <fullName evidence="2">Small ribosomal subunit protein eS12</fullName>
    </recommendedName>
    <alternativeName>
        <fullName>40S ribosomal protein S12</fullName>
    </alternativeName>
</protein>
<feature type="initiator methionine" description="Removed" evidence="1">
    <location>
        <position position="1"/>
    </location>
</feature>
<feature type="chain" id="PRO_0000122327" description="Small ribosomal subunit protein eS12">
    <location>
        <begin position="2"/>
        <end position="132"/>
    </location>
</feature>
<sequence>MAEEGSPAGGVMDVNTALPEVLKTALIHDGLAPGIREAAKALDKRQAHLCVLAANCDEPMYVKLVEALCAEHQINLIKVDDNKKLGEWVGLCKIDREGKPRKVVGCSCVVVKDYGKESQAKDVIEEYFKSKK</sequence>
<reference key="1">
    <citation type="submission" date="1997-03" db="EMBL/GenBank/DDBJ databases">
        <title>Cloning of a cDNA encoding the S12 ribosomal protein from the tilapia Oreochromis niloticus.</title>
        <authorList>
            <person name="Hamilton L.C."/>
            <person name="Wright J.M."/>
        </authorList>
    </citation>
    <scope>NUCLEOTIDE SEQUENCE [MRNA]</scope>
    <source>
        <tissue>Brain</tissue>
    </source>
</reference>
<evidence type="ECO:0000250" key="1"/>
<evidence type="ECO:0000305" key="2"/>
<comment type="similarity">
    <text evidence="2">Belongs to the eukaryotic ribosomal protein eS12 family.</text>
</comment>
<dbReference type="EMBL" id="U94500">
    <property type="protein sequence ID" value="AAB53221.1"/>
    <property type="molecule type" value="mRNA"/>
</dbReference>
<dbReference type="RefSeq" id="NP_001266590.1">
    <property type="nucleotide sequence ID" value="NM_001279661.1"/>
</dbReference>
<dbReference type="SMR" id="O13019"/>
<dbReference type="FunCoup" id="O13019">
    <property type="interactions" value="1971"/>
</dbReference>
<dbReference type="STRING" id="8128.ENSONIP00000039256"/>
<dbReference type="GeneID" id="100534443"/>
<dbReference type="KEGG" id="onl:100534443"/>
<dbReference type="CTD" id="6206"/>
<dbReference type="eggNOG" id="KOG3406">
    <property type="taxonomic scope" value="Eukaryota"/>
</dbReference>
<dbReference type="InParanoid" id="O13019"/>
<dbReference type="OrthoDB" id="10249311at2759"/>
<dbReference type="Proteomes" id="UP000005207">
    <property type="component" value="Unplaced"/>
</dbReference>
<dbReference type="GO" id="GO:1990904">
    <property type="term" value="C:ribonucleoprotein complex"/>
    <property type="evidence" value="ECO:0007669"/>
    <property type="project" value="UniProtKB-KW"/>
</dbReference>
<dbReference type="GO" id="GO:0005840">
    <property type="term" value="C:ribosome"/>
    <property type="evidence" value="ECO:0007669"/>
    <property type="project" value="UniProtKB-KW"/>
</dbReference>
<dbReference type="GO" id="GO:0003735">
    <property type="term" value="F:structural constituent of ribosome"/>
    <property type="evidence" value="ECO:0007669"/>
    <property type="project" value="InterPro"/>
</dbReference>
<dbReference type="GO" id="GO:0006412">
    <property type="term" value="P:translation"/>
    <property type="evidence" value="ECO:0007669"/>
    <property type="project" value="InterPro"/>
</dbReference>
<dbReference type="FunFam" id="3.30.1330.30:FF:000011">
    <property type="entry name" value="40S ribosomal protein S12"/>
    <property type="match status" value="1"/>
</dbReference>
<dbReference type="Gene3D" id="3.30.1330.30">
    <property type="match status" value="1"/>
</dbReference>
<dbReference type="InterPro" id="IPR029064">
    <property type="entry name" value="Ribosomal_eL30-like_sf"/>
</dbReference>
<dbReference type="InterPro" id="IPR004038">
    <property type="entry name" value="Ribosomal_eL8/eL30/eS12/Gad45"/>
</dbReference>
<dbReference type="InterPro" id="IPR000530">
    <property type="entry name" value="Ribosomal_eS12"/>
</dbReference>
<dbReference type="InterPro" id="IPR047860">
    <property type="entry name" value="Ribosomal_eS12_CS"/>
</dbReference>
<dbReference type="PANTHER" id="PTHR11843">
    <property type="entry name" value="40S RIBOSOMAL PROTEIN S12"/>
    <property type="match status" value="1"/>
</dbReference>
<dbReference type="Pfam" id="PF01248">
    <property type="entry name" value="Ribosomal_L7Ae"/>
    <property type="match status" value="1"/>
</dbReference>
<dbReference type="PRINTS" id="PR00972">
    <property type="entry name" value="RIBSOMALS12E"/>
</dbReference>
<dbReference type="SUPFAM" id="SSF55315">
    <property type="entry name" value="L30e-like"/>
    <property type="match status" value="1"/>
</dbReference>
<dbReference type="PROSITE" id="PS01189">
    <property type="entry name" value="RIBOSOMAL_S12E"/>
    <property type="match status" value="1"/>
</dbReference>
<name>RS12_ORENI</name>